<feature type="chain" id="PRO_0000298371" description="Disulfide bond formation protein B">
    <location>
        <begin position="1"/>
        <end position="162"/>
    </location>
</feature>
<feature type="topological domain" description="Cytoplasmic" evidence="1">
    <location>
        <begin position="1"/>
        <end position="8"/>
    </location>
</feature>
<feature type="transmembrane region" description="Helical" evidence="1">
    <location>
        <begin position="9"/>
        <end position="25"/>
    </location>
</feature>
<feature type="topological domain" description="Periplasmic" evidence="1">
    <location>
        <begin position="26"/>
        <end position="43"/>
    </location>
</feature>
<feature type="transmembrane region" description="Helical" evidence="1">
    <location>
        <begin position="44"/>
        <end position="60"/>
    </location>
</feature>
<feature type="topological domain" description="Cytoplasmic" evidence="1">
    <location>
        <begin position="61"/>
        <end position="67"/>
    </location>
</feature>
<feature type="transmembrane region" description="Helical" evidence="1">
    <location>
        <begin position="68"/>
        <end position="85"/>
    </location>
</feature>
<feature type="topological domain" description="Periplasmic" evidence="1">
    <location>
        <begin position="86"/>
        <end position="141"/>
    </location>
</feature>
<feature type="transmembrane region" description="Helical" evidence="1">
    <location>
        <begin position="142"/>
        <end position="160"/>
    </location>
</feature>
<feature type="topological domain" description="Cytoplasmic" evidence="1">
    <location>
        <begin position="161"/>
        <end position="162"/>
    </location>
</feature>
<feature type="disulfide bond" description="Redox-active" evidence="1">
    <location>
        <begin position="35"/>
        <end position="38"/>
    </location>
</feature>
<feature type="disulfide bond" description="Redox-active" evidence="1">
    <location>
        <begin position="101"/>
        <end position="128"/>
    </location>
</feature>
<keyword id="KW-0997">Cell inner membrane</keyword>
<keyword id="KW-1003">Cell membrane</keyword>
<keyword id="KW-0143">Chaperone</keyword>
<keyword id="KW-1015">Disulfide bond</keyword>
<keyword id="KW-0249">Electron transport</keyword>
<keyword id="KW-0472">Membrane</keyword>
<keyword id="KW-0560">Oxidoreductase</keyword>
<keyword id="KW-0676">Redox-active center</keyword>
<keyword id="KW-1185">Reference proteome</keyword>
<keyword id="KW-0812">Transmembrane</keyword>
<keyword id="KW-1133">Transmembrane helix</keyword>
<keyword id="KW-0813">Transport</keyword>
<name>DSBB_NEIG1</name>
<reference key="1">
    <citation type="submission" date="2003-03" db="EMBL/GenBank/DDBJ databases">
        <title>The complete genome sequence of Neisseria gonorrhoeae.</title>
        <authorList>
            <person name="Lewis L.A."/>
            <person name="Gillaspy A.F."/>
            <person name="McLaughlin R.E."/>
            <person name="Gipson M."/>
            <person name="Ducey T.F."/>
            <person name="Ownbey T."/>
            <person name="Hartman K."/>
            <person name="Nydick C."/>
            <person name="Carson M.B."/>
            <person name="Vaughn J."/>
            <person name="Thomson C."/>
            <person name="Song L."/>
            <person name="Lin S."/>
            <person name="Yuan X."/>
            <person name="Najar F."/>
            <person name="Zhan M."/>
            <person name="Ren Q."/>
            <person name="Zhu H."/>
            <person name="Qi S."/>
            <person name="Kenton S.M."/>
            <person name="Lai H."/>
            <person name="White J.D."/>
            <person name="Clifton S."/>
            <person name="Roe B.A."/>
            <person name="Dyer D.W."/>
        </authorList>
    </citation>
    <scope>NUCLEOTIDE SEQUENCE [LARGE SCALE GENOMIC DNA]</scope>
    <source>
        <strain>ATCC 700825 / FA 1090</strain>
    </source>
</reference>
<comment type="function">
    <text evidence="1">Required for disulfide bond formation in some periplasmic proteins. Acts by oxidizing the DsbA protein.</text>
</comment>
<comment type="subcellular location">
    <subcellularLocation>
        <location evidence="1">Cell inner membrane</location>
        <topology evidence="1">Multi-pass membrane protein</topology>
    </subcellularLocation>
</comment>
<comment type="similarity">
    <text evidence="1">Belongs to the DsbB family.</text>
</comment>
<organism>
    <name type="scientific">Neisseria gonorrhoeae (strain ATCC 700825 / FA 1090)</name>
    <dbReference type="NCBI Taxonomy" id="242231"/>
    <lineage>
        <taxon>Bacteria</taxon>
        <taxon>Pseudomonadati</taxon>
        <taxon>Pseudomonadota</taxon>
        <taxon>Betaproteobacteria</taxon>
        <taxon>Neisseriales</taxon>
        <taxon>Neisseriaceae</taxon>
        <taxon>Neisseria</taxon>
    </lineage>
</organism>
<evidence type="ECO:0000255" key="1">
    <source>
        <dbReference type="HAMAP-Rule" id="MF_00286"/>
    </source>
</evidence>
<sequence>MTPLFRKAVWLLFAVSVCAFAGSLAAQYVLGMEPCVLCISQRLCVLATALCAAVVLACKPKGRVGGLSGAVFISIPAVTGISVAAYQLWLQSLPPGAAPSCGAPWTFRLKGWPLFDWFEPVVRGFGNCAEPDYLLGVALPVWSAAYFLAVVLTVWWAWARAK</sequence>
<accession>Q5F791</accession>
<gene>
    <name evidence="1" type="primary">dsbB</name>
    <name type="ordered locus">NGO_1292</name>
</gene>
<protein>
    <recommendedName>
        <fullName evidence="1">Disulfide bond formation protein B</fullName>
    </recommendedName>
    <alternativeName>
        <fullName evidence="1">Disulfide oxidoreductase</fullName>
    </alternativeName>
</protein>
<dbReference type="EMBL" id="AE004969">
    <property type="protein sequence ID" value="AAW89946.1"/>
    <property type="molecule type" value="Genomic_DNA"/>
</dbReference>
<dbReference type="RefSeq" id="WP_010951234.1">
    <property type="nucleotide sequence ID" value="NC_002946.2"/>
</dbReference>
<dbReference type="RefSeq" id="YP_208358.1">
    <property type="nucleotide sequence ID" value="NC_002946.2"/>
</dbReference>
<dbReference type="SMR" id="Q5F791"/>
<dbReference type="STRING" id="242231.NGO_1292"/>
<dbReference type="KEGG" id="ngo:NGO_1292"/>
<dbReference type="PATRIC" id="fig|242231.10.peg.1518"/>
<dbReference type="HOGENOM" id="CLU_098660_1_1_4"/>
<dbReference type="Proteomes" id="UP000000535">
    <property type="component" value="Chromosome"/>
</dbReference>
<dbReference type="GO" id="GO:0005886">
    <property type="term" value="C:plasma membrane"/>
    <property type="evidence" value="ECO:0007669"/>
    <property type="project" value="UniProtKB-SubCell"/>
</dbReference>
<dbReference type="GO" id="GO:0009055">
    <property type="term" value="F:electron transfer activity"/>
    <property type="evidence" value="ECO:0007669"/>
    <property type="project" value="UniProtKB-UniRule"/>
</dbReference>
<dbReference type="GO" id="GO:0015035">
    <property type="term" value="F:protein-disulfide reductase activity"/>
    <property type="evidence" value="ECO:0007669"/>
    <property type="project" value="UniProtKB-UniRule"/>
</dbReference>
<dbReference type="GO" id="GO:0006457">
    <property type="term" value="P:protein folding"/>
    <property type="evidence" value="ECO:0007669"/>
    <property type="project" value="InterPro"/>
</dbReference>
<dbReference type="Gene3D" id="1.20.1550.10">
    <property type="entry name" value="DsbB-like"/>
    <property type="match status" value="1"/>
</dbReference>
<dbReference type="HAMAP" id="MF_00286">
    <property type="entry name" value="DsbB"/>
    <property type="match status" value="1"/>
</dbReference>
<dbReference type="InterPro" id="IPR003752">
    <property type="entry name" value="DiS_bond_form_DsbB/BdbC"/>
</dbReference>
<dbReference type="InterPro" id="IPR022920">
    <property type="entry name" value="Disulphide_bond_form_DsbB"/>
</dbReference>
<dbReference type="InterPro" id="IPR050183">
    <property type="entry name" value="DsbB"/>
</dbReference>
<dbReference type="InterPro" id="IPR023380">
    <property type="entry name" value="DsbB-like_sf"/>
</dbReference>
<dbReference type="PANTHER" id="PTHR36570">
    <property type="entry name" value="DISULFIDE BOND FORMATION PROTEIN B"/>
    <property type="match status" value="1"/>
</dbReference>
<dbReference type="PANTHER" id="PTHR36570:SF3">
    <property type="entry name" value="DISULFIDE BOND FORMATION PROTEIN B"/>
    <property type="match status" value="1"/>
</dbReference>
<dbReference type="Pfam" id="PF02600">
    <property type="entry name" value="DsbB"/>
    <property type="match status" value="1"/>
</dbReference>
<dbReference type="SUPFAM" id="SSF158442">
    <property type="entry name" value="DsbB-like"/>
    <property type="match status" value="1"/>
</dbReference>
<proteinExistence type="inferred from homology"/>